<protein>
    <recommendedName>
        <fullName>PACRG-like protein</fullName>
    </recommendedName>
</protein>
<sequence>MQKSEGSGGTQLKNRATGNYDQRTSSSTQLKHRNAVQGSKSSLSTSSPESARKLHPRPSDKLNPKTINPFGEQSRVPSAFAAIYSKGGIPCRLVHGSVKHRLQWECPPESLSFDPLLITLAEGLRETKHPYTFVSKEGFRELLLVKGAPEKAIPLLPRLIPVLKAALVHSDDEVFERGLNALVQLSVVVGPSLNDHLKHLLTSLSKRLMDKKFKEPITSALQKLEQHGGSGSLSIIKSKIPTYCSICC</sequence>
<proteinExistence type="evidence at protein level"/>
<name>PACRL_HUMAN</name>
<reference key="1">
    <citation type="journal article" date="2004" name="Nat. Genet.">
        <title>Complete sequencing and characterization of 21,243 full-length human cDNAs.</title>
        <authorList>
            <person name="Ota T."/>
            <person name="Suzuki Y."/>
            <person name="Nishikawa T."/>
            <person name="Otsuki T."/>
            <person name="Sugiyama T."/>
            <person name="Irie R."/>
            <person name="Wakamatsu A."/>
            <person name="Hayashi K."/>
            <person name="Sato H."/>
            <person name="Nagai K."/>
            <person name="Kimura K."/>
            <person name="Makita H."/>
            <person name="Sekine M."/>
            <person name="Obayashi M."/>
            <person name="Nishi T."/>
            <person name="Shibahara T."/>
            <person name="Tanaka T."/>
            <person name="Ishii S."/>
            <person name="Yamamoto J."/>
            <person name="Saito K."/>
            <person name="Kawai Y."/>
            <person name="Isono Y."/>
            <person name="Nakamura Y."/>
            <person name="Nagahari K."/>
            <person name="Murakami K."/>
            <person name="Yasuda T."/>
            <person name="Iwayanagi T."/>
            <person name="Wagatsuma M."/>
            <person name="Shiratori A."/>
            <person name="Sudo H."/>
            <person name="Hosoiri T."/>
            <person name="Kaku Y."/>
            <person name="Kodaira H."/>
            <person name="Kondo H."/>
            <person name="Sugawara M."/>
            <person name="Takahashi M."/>
            <person name="Kanda K."/>
            <person name="Yokoi T."/>
            <person name="Furuya T."/>
            <person name="Kikkawa E."/>
            <person name="Omura Y."/>
            <person name="Abe K."/>
            <person name="Kamihara K."/>
            <person name="Katsuta N."/>
            <person name="Sato K."/>
            <person name="Tanikawa M."/>
            <person name="Yamazaki M."/>
            <person name="Ninomiya K."/>
            <person name="Ishibashi T."/>
            <person name="Yamashita H."/>
            <person name="Murakawa K."/>
            <person name="Fujimori K."/>
            <person name="Tanai H."/>
            <person name="Kimata M."/>
            <person name="Watanabe M."/>
            <person name="Hiraoka S."/>
            <person name="Chiba Y."/>
            <person name="Ishida S."/>
            <person name="Ono Y."/>
            <person name="Takiguchi S."/>
            <person name="Watanabe S."/>
            <person name="Yosida M."/>
            <person name="Hotuta T."/>
            <person name="Kusano J."/>
            <person name="Kanehori K."/>
            <person name="Takahashi-Fujii A."/>
            <person name="Hara H."/>
            <person name="Tanase T.-O."/>
            <person name="Nomura Y."/>
            <person name="Togiya S."/>
            <person name="Komai F."/>
            <person name="Hara R."/>
            <person name="Takeuchi K."/>
            <person name="Arita M."/>
            <person name="Imose N."/>
            <person name="Musashino K."/>
            <person name="Yuuki H."/>
            <person name="Oshima A."/>
            <person name="Sasaki N."/>
            <person name="Aotsuka S."/>
            <person name="Yoshikawa Y."/>
            <person name="Matsunawa H."/>
            <person name="Ichihara T."/>
            <person name="Shiohata N."/>
            <person name="Sano S."/>
            <person name="Moriya S."/>
            <person name="Momiyama H."/>
            <person name="Satoh N."/>
            <person name="Takami S."/>
            <person name="Terashima Y."/>
            <person name="Suzuki O."/>
            <person name="Nakagawa S."/>
            <person name="Senoh A."/>
            <person name="Mizoguchi H."/>
            <person name="Goto Y."/>
            <person name="Shimizu F."/>
            <person name="Wakebe H."/>
            <person name="Hishigaki H."/>
            <person name="Watanabe T."/>
            <person name="Sugiyama A."/>
            <person name="Takemoto M."/>
            <person name="Kawakami B."/>
            <person name="Yamazaki M."/>
            <person name="Watanabe K."/>
            <person name="Kumagai A."/>
            <person name="Itakura S."/>
            <person name="Fukuzumi Y."/>
            <person name="Fujimori Y."/>
            <person name="Komiyama M."/>
            <person name="Tashiro H."/>
            <person name="Tanigami A."/>
            <person name="Fujiwara T."/>
            <person name="Ono T."/>
            <person name="Yamada K."/>
            <person name="Fujii Y."/>
            <person name="Ozaki K."/>
            <person name="Hirao M."/>
            <person name="Ohmori Y."/>
            <person name="Kawabata A."/>
            <person name="Hikiji T."/>
            <person name="Kobatake N."/>
            <person name="Inagaki H."/>
            <person name="Ikema Y."/>
            <person name="Okamoto S."/>
            <person name="Okitani R."/>
            <person name="Kawakami T."/>
            <person name="Noguchi S."/>
            <person name="Itoh T."/>
            <person name="Shigeta K."/>
            <person name="Senba T."/>
            <person name="Matsumura K."/>
            <person name="Nakajima Y."/>
            <person name="Mizuno T."/>
            <person name="Morinaga M."/>
            <person name="Sasaki M."/>
            <person name="Togashi T."/>
            <person name="Oyama M."/>
            <person name="Hata H."/>
            <person name="Watanabe M."/>
            <person name="Komatsu T."/>
            <person name="Mizushima-Sugano J."/>
            <person name="Satoh T."/>
            <person name="Shirai Y."/>
            <person name="Takahashi Y."/>
            <person name="Nakagawa K."/>
            <person name="Okumura K."/>
            <person name="Nagase T."/>
            <person name="Nomura N."/>
            <person name="Kikuchi H."/>
            <person name="Masuho Y."/>
            <person name="Yamashita R."/>
            <person name="Nakai K."/>
            <person name="Yada T."/>
            <person name="Nakamura Y."/>
            <person name="Ohara O."/>
            <person name="Isogai T."/>
            <person name="Sugano S."/>
        </authorList>
    </citation>
    <scope>NUCLEOTIDE SEQUENCE [LARGE SCALE MRNA] (ISOFORMS 1; 2; 3 AND 4)</scope>
    <source>
        <tissue>Brain</tissue>
        <tissue>Testis</tissue>
    </source>
</reference>
<reference key="2">
    <citation type="journal article" date="2005" name="Nature">
        <title>Generation and annotation of the DNA sequences of human chromosomes 2 and 4.</title>
        <authorList>
            <person name="Hillier L.W."/>
            <person name="Graves T.A."/>
            <person name="Fulton R.S."/>
            <person name="Fulton L.A."/>
            <person name="Pepin K.H."/>
            <person name="Minx P."/>
            <person name="Wagner-McPherson C."/>
            <person name="Layman D."/>
            <person name="Wylie K."/>
            <person name="Sekhon M."/>
            <person name="Becker M.C."/>
            <person name="Fewell G.A."/>
            <person name="Delehaunty K.D."/>
            <person name="Miner T.L."/>
            <person name="Nash W.E."/>
            <person name="Kremitzki C."/>
            <person name="Oddy L."/>
            <person name="Du H."/>
            <person name="Sun H."/>
            <person name="Bradshaw-Cordum H."/>
            <person name="Ali J."/>
            <person name="Carter J."/>
            <person name="Cordes M."/>
            <person name="Harris A."/>
            <person name="Isak A."/>
            <person name="van Brunt A."/>
            <person name="Nguyen C."/>
            <person name="Du F."/>
            <person name="Courtney L."/>
            <person name="Kalicki J."/>
            <person name="Ozersky P."/>
            <person name="Abbott S."/>
            <person name="Armstrong J."/>
            <person name="Belter E.A."/>
            <person name="Caruso L."/>
            <person name="Cedroni M."/>
            <person name="Cotton M."/>
            <person name="Davidson T."/>
            <person name="Desai A."/>
            <person name="Elliott G."/>
            <person name="Erb T."/>
            <person name="Fronick C."/>
            <person name="Gaige T."/>
            <person name="Haakenson W."/>
            <person name="Haglund K."/>
            <person name="Holmes A."/>
            <person name="Harkins R."/>
            <person name="Kim K."/>
            <person name="Kruchowski S.S."/>
            <person name="Strong C.M."/>
            <person name="Grewal N."/>
            <person name="Goyea E."/>
            <person name="Hou S."/>
            <person name="Levy A."/>
            <person name="Martinka S."/>
            <person name="Mead K."/>
            <person name="McLellan M.D."/>
            <person name="Meyer R."/>
            <person name="Randall-Maher J."/>
            <person name="Tomlinson C."/>
            <person name="Dauphin-Kohlberg S."/>
            <person name="Kozlowicz-Reilly A."/>
            <person name="Shah N."/>
            <person name="Swearengen-Shahid S."/>
            <person name="Snider J."/>
            <person name="Strong J.T."/>
            <person name="Thompson J."/>
            <person name="Yoakum M."/>
            <person name="Leonard S."/>
            <person name="Pearman C."/>
            <person name="Trani L."/>
            <person name="Radionenko M."/>
            <person name="Waligorski J.E."/>
            <person name="Wang C."/>
            <person name="Rock S.M."/>
            <person name="Tin-Wollam A.-M."/>
            <person name="Maupin R."/>
            <person name="Latreille P."/>
            <person name="Wendl M.C."/>
            <person name="Yang S.-P."/>
            <person name="Pohl C."/>
            <person name="Wallis J.W."/>
            <person name="Spieth J."/>
            <person name="Bieri T.A."/>
            <person name="Berkowicz N."/>
            <person name="Nelson J.O."/>
            <person name="Osborne J."/>
            <person name="Ding L."/>
            <person name="Meyer R."/>
            <person name="Sabo A."/>
            <person name="Shotland Y."/>
            <person name="Sinha P."/>
            <person name="Wohldmann P.E."/>
            <person name="Cook L.L."/>
            <person name="Hickenbotham M.T."/>
            <person name="Eldred J."/>
            <person name="Williams D."/>
            <person name="Jones T.A."/>
            <person name="She X."/>
            <person name="Ciccarelli F.D."/>
            <person name="Izaurralde E."/>
            <person name="Taylor J."/>
            <person name="Schmutz J."/>
            <person name="Myers R.M."/>
            <person name="Cox D.R."/>
            <person name="Huang X."/>
            <person name="McPherson J.D."/>
            <person name="Mardis E.R."/>
            <person name="Clifton S.W."/>
            <person name="Warren W.C."/>
            <person name="Chinwalla A.T."/>
            <person name="Eddy S.R."/>
            <person name="Marra M.A."/>
            <person name="Ovcharenko I."/>
            <person name="Furey T.S."/>
            <person name="Miller W."/>
            <person name="Eichler E.E."/>
            <person name="Bork P."/>
            <person name="Suyama M."/>
            <person name="Torrents D."/>
            <person name="Waterston R.H."/>
            <person name="Wilson R.K."/>
        </authorList>
    </citation>
    <scope>NUCLEOTIDE SEQUENCE [LARGE SCALE GENOMIC DNA]</scope>
</reference>
<reference key="3">
    <citation type="journal article" date="2004" name="Genome Res.">
        <title>The status, quality, and expansion of the NIH full-length cDNA project: the Mammalian Gene Collection (MGC).</title>
        <authorList>
            <consortium name="The MGC Project Team"/>
        </authorList>
    </citation>
    <scope>NUCLEOTIDE SEQUENCE [LARGE SCALE MRNA] (ISOFORM 2)</scope>
    <source>
        <tissue>Placenta</tissue>
    </source>
</reference>
<reference key="4">
    <citation type="journal article" date="2012" name="Proc. Natl. Acad. Sci. U.S.A.">
        <title>N-terminal acetylome analyses and functional insights of the N-terminal acetyltransferase NatB.</title>
        <authorList>
            <person name="Van Damme P."/>
            <person name="Lasa M."/>
            <person name="Polevoda B."/>
            <person name="Gazquez C."/>
            <person name="Elosegui-Artola A."/>
            <person name="Kim D.S."/>
            <person name="De Juan-Pardo E."/>
            <person name="Demeyer K."/>
            <person name="Hole K."/>
            <person name="Larrea E."/>
            <person name="Timmerman E."/>
            <person name="Prieto J."/>
            <person name="Arnesen T."/>
            <person name="Sherman F."/>
            <person name="Gevaert K."/>
            <person name="Aldabe R."/>
        </authorList>
    </citation>
    <scope>ACETYLATION [LARGE SCALE ANALYSIS] AT MET-1</scope>
    <scope>IDENTIFICATION BY MASS SPECTROMETRY [LARGE SCALE ANALYSIS]</scope>
</reference>
<accession>Q8N7B6</accession>
<accession>B2RDB9</accession>
<accession>B4DFF8</accession>
<accession>B4DMN7</accession>
<accession>Q8TBA8</accession>
<organism>
    <name type="scientific">Homo sapiens</name>
    <name type="common">Human</name>
    <dbReference type="NCBI Taxonomy" id="9606"/>
    <lineage>
        <taxon>Eukaryota</taxon>
        <taxon>Metazoa</taxon>
        <taxon>Chordata</taxon>
        <taxon>Craniata</taxon>
        <taxon>Vertebrata</taxon>
        <taxon>Euteleostomi</taxon>
        <taxon>Mammalia</taxon>
        <taxon>Eutheria</taxon>
        <taxon>Euarchontoglires</taxon>
        <taxon>Primates</taxon>
        <taxon>Haplorrhini</taxon>
        <taxon>Catarrhini</taxon>
        <taxon>Hominidae</taxon>
        <taxon>Homo</taxon>
    </lineage>
</organism>
<gene>
    <name type="primary">PACRGL</name>
    <name type="synonym">C4orf28</name>
</gene>
<feature type="chain" id="PRO_0000278243" description="PACRG-like protein">
    <location>
        <begin position="1"/>
        <end position="248"/>
    </location>
</feature>
<feature type="region of interest" description="Disordered" evidence="2">
    <location>
        <begin position="1"/>
        <end position="71"/>
    </location>
</feature>
<feature type="compositionally biased region" description="Polar residues" evidence="2">
    <location>
        <begin position="1"/>
        <end position="29"/>
    </location>
</feature>
<feature type="compositionally biased region" description="Low complexity" evidence="2">
    <location>
        <begin position="39"/>
        <end position="49"/>
    </location>
</feature>
<feature type="modified residue" description="N-acetylmethionine" evidence="6">
    <location>
        <position position="1"/>
    </location>
</feature>
<feature type="modified residue" description="Phosphoserine" evidence="1">
    <location>
        <position position="47"/>
    </location>
</feature>
<feature type="splice variant" id="VSP_043351" description="In isoform 3." evidence="3">
    <location>
        <begin position="70"/>
        <end position="167"/>
    </location>
</feature>
<feature type="splice variant" id="VSP_045095" description="In isoform 4." evidence="3">
    <location>
        <begin position="70"/>
        <end position="122"/>
    </location>
</feature>
<feature type="splice variant" id="VSP_023206" description="In isoform 2 and isoform 3." evidence="3 4">
    <location>
        <begin position="203"/>
        <end position="229"/>
    </location>
</feature>
<feature type="splice variant" id="VSP_045096" description="In isoform 4." evidence="3">
    <original>LSKRLMDKKFKEPITSALQKLEQHGGSGSLSIIKSKIPTYCSICC</original>
    <variation>DPVQLMRFPRPLLGLMICQKDPWNSGKLLLAVMVSYNTQKIKIKISKGEP</variation>
    <location>
        <begin position="204"/>
        <end position="248"/>
    </location>
</feature>
<feature type="sequence conflict" description="In Ref. 1; BAC05381." evidence="5" ref="1">
    <original>W</original>
    <variation>R</variation>
    <location>
        <position position="104"/>
    </location>
</feature>
<comment type="interaction">
    <interactant intactId="EBI-3925298">
        <id>Q8N7B6</id>
    </interactant>
    <interactant intactId="EBI-3906629">
        <id>P15173</id>
        <label>MYOG</label>
    </interactant>
    <organismsDiffer>false</organismsDiffer>
    <experiments>3</experiments>
</comment>
<comment type="interaction">
    <interactant intactId="EBI-3925298">
        <id>Q8N7B6</id>
    </interactant>
    <interactant intactId="EBI-746283">
        <id>Q96D15</id>
        <label>RCN3</label>
    </interactant>
    <organismsDiffer>false</organismsDiffer>
    <experiments>3</experiments>
</comment>
<comment type="interaction">
    <interactant intactId="EBI-10694433">
        <id>Q8N7B6-2</id>
    </interactant>
    <interactant intactId="EBI-750671">
        <id>Q15699</id>
        <label>ALX1</label>
    </interactant>
    <organismsDiffer>false</organismsDiffer>
    <experiments>3</experiments>
</comment>
<comment type="interaction">
    <interactant intactId="EBI-10694433">
        <id>Q8N7B6-2</id>
    </interactant>
    <interactant intactId="EBI-10243741">
        <id>Q5H9J7</id>
        <label>BEX5</label>
    </interactant>
    <organismsDiffer>false</organismsDiffer>
    <experiments>3</experiments>
</comment>
<comment type="interaction">
    <interactant intactId="EBI-10694433">
        <id>Q8N7B6-2</id>
    </interactant>
    <interactant intactId="EBI-618309">
        <id>Q08379</id>
        <label>GOLGA2</label>
    </interactant>
    <organismsDiffer>false</organismsDiffer>
    <experiments>3</experiments>
</comment>
<comment type="interaction">
    <interactant intactId="EBI-10694433">
        <id>Q8N7B6-2</id>
    </interactant>
    <interactant intactId="EBI-1054873">
        <id>Q9Y5Q9</id>
        <label>GTF3C3</label>
    </interactant>
    <organismsDiffer>false</organismsDiffer>
    <experiments>3</experiments>
</comment>
<comment type="interaction">
    <interactant intactId="EBI-10694433">
        <id>Q8N7B6-2</id>
    </interactant>
    <interactant intactId="EBI-1055254">
        <id>Q8WXH2</id>
        <label>JPH3</label>
    </interactant>
    <organismsDiffer>false</organismsDiffer>
    <experiments>3</experiments>
</comment>
<comment type="interaction">
    <interactant intactId="EBI-10694433">
        <id>Q8N7B6-2</id>
    </interactant>
    <interactant intactId="EBI-17491620">
        <id>P13349</id>
        <label>MYF5</label>
    </interactant>
    <organismsDiffer>false</organismsDiffer>
    <experiments>3</experiments>
</comment>
<comment type="interaction">
    <interactant intactId="EBI-10694433">
        <id>Q8N7B6-2</id>
    </interactant>
    <interactant intactId="EBI-3906629">
        <id>P15173</id>
        <label>MYOG</label>
    </interactant>
    <organismsDiffer>false</organismsDiffer>
    <experiments>3</experiments>
</comment>
<comment type="interaction">
    <interactant intactId="EBI-10694433">
        <id>Q8N7B6-2</id>
    </interactant>
    <interactant intactId="EBI-713665">
        <id>P19404</id>
        <label>NDUFV2</label>
    </interactant>
    <organismsDiffer>false</organismsDiffer>
    <experiments>3</experiments>
</comment>
<comment type="interaction">
    <interactant intactId="EBI-10694433">
        <id>Q8N7B6-2</id>
    </interactant>
    <interactant intactId="EBI-5235340">
        <id>Q7Z699</id>
        <label>SPRED1</label>
    </interactant>
    <organismsDiffer>false</organismsDiffer>
    <experiments>3</experiments>
</comment>
<comment type="interaction">
    <interactant intactId="EBI-10694433">
        <id>Q8N7B6-2</id>
    </interactant>
    <interactant intactId="EBI-745958">
        <id>Q5VWN6</id>
        <label>TASOR2</label>
    </interactant>
    <organismsDiffer>false</organismsDiffer>
    <experiments>3</experiments>
</comment>
<comment type="interaction">
    <interactant intactId="EBI-10694433">
        <id>Q8N7B6-2</id>
    </interactant>
    <interactant intactId="EBI-18122152">
        <id>Q6F5E7</id>
        <label>TXNRD3NB</label>
    </interactant>
    <organismsDiffer>false</organismsDiffer>
    <experiments>3</experiments>
</comment>
<comment type="interaction">
    <interactant intactId="EBI-10694433">
        <id>Q8N7B6-2</id>
    </interactant>
    <interactant intactId="EBI-1048893">
        <id>P54577</id>
        <label>YARS1</label>
    </interactant>
    <organismsDiffer>false</organismsDiffer>
    <experiments>3</experiments>
</comment>
<comment type="interaction">
    <interactant intactId="EBI-10694433">
        <id>Q8N7B6-2</id>
    </interactant>
    <interactant intactId="EBI-12017160">
        <id>Q96DT7-3</id>
        <label>ZBTB10</label>
    </interactant>
    <organismsDiffer>false</organismsDiffer>
    <experiments>3</experiments>
</comment>
<comment type="alternative products">
    <event type="alternative splicing"/>
    <isoform>
        <id>Q8N7B6-1</id>
        <name>1</name>
        <sequence type="displayed"/>
    </isoform>
    <isoform>
        <id>Q8N7B6-2</id>
        <name>2</name>
        <sequence type="described" ref="VSP_023206"/>
    </isoform>
    <isoform>
        <id>Q8N7B6-3</id>
        <name>3</name>
        <sequence type="described" ref="VSP_043351 VSP_023206"/>
    </isoform>
    <isoform>
        <id>Q8N7B6-4</id>
        <name>4</name>
        <sequence type="described" ref="VSP_045095 VSP_045096"/>
    </isoform>
</comment>
<evidence type="ECO:0000250" key="1">
    <source>
        <dbReference type="UniProtKB" id="Q9D3X5"/>
    </source>
</evidence>
<evidence type="ECO:0000256" key="2">
    <source>
        <dbReference type="SAM" id="MobiDB-lite"/>
    </source>
</evidence>
<evidence type="ECO:0000303" key="3">
    <source>
    </source>
</evidence>
<evidence type="ECO:0000303" key="4">
    <source>
    </source>
</evidence>
<evidence type="ECO:0000305" key="5"/>
<evidence type="ECO:0007744" key="6">
    <source>
    </source>
</evidence>
<dbReference type="EMBL" id="AK098692">
    <property type="protein sequence ID" value="BAC05381.1"/>
    <property type="molecule type" value="mRNA"/>
</dbReference>
<dbReference type="EMBL" id="AK297556">
    <property type="protein sequence ID" value="BAG59949.1"/>
    <property type="molecule type" value="mRNA"/>
</dbReference>
<dbReference type="EMBL" id="AK315482">
    <property type="protein sequence ID" value="BAG37866.1"/>
    <property type="molecule type" value="mRNA"/>
</dbReference>
<dbReference type="EMBL" id="AK294077">
    <property type="protein sequence ID" value="BAG57419.1"/>
    <property type="molecule type" value="mRNA"/>
</dbReference>
<dbReference type="EMBL" id="AC097505">
    <property type="status" value="NOT_ANNOTATED_CDS"/>
    <property type="molecule type" value="Genomic_DNA"/>
</dbReference>
<dbReference type="EMBL" id="AC104065">
    <property type="protein sequence ID" value="AAY40910.1"/>
    <property type="molecule type" value="Genomic_DNA"/>
</dbReference>
<dbReference type="EMBL" id="BC023002">
    <property type="protein sequence ID" value="AAH23002.1"/>
    <property type="molecule type" value="mRNA"/>
</dbReference>
<dbReference type="CCDS" id="CCDS3427.1">
    <molecule id="Q8N7B6-2"/>
</dbReference>
<dbReference type="CCDS" id="CCDS47034.1">
    <molecule id="Q8N7B6-3"/>
</dbReference>
<dbReference type="CCDS" id="CCDS58895.1">
    <molecule id="Q8N7B6-1"/>
</dbReference>
<dbReference type="CCDS" id="CCDS58896.1">
    <molecule id="Q8N7B6-4"/>
</dbReference>
<dbReference type="RefSeq" id="NP_001124199.1">
    <molecule id="Q8N7B6-3"/>
    <property type="nucleotide sequence ID" value="NM_001130727.3"/>
</dbReference>
<dbReference type="RefSeq" id="NP_001245274.1">
    <molecule id="Q8N7B6-1"/>
    <property type="nucleotide sequence ID" value="NM_001258345.3"/>
</dbReference>
<dbReference type="RefSeq" id="NP_001245275.1">
    <molecule id="Q8N7B6-4"/>
    <property type="nucleotide sequence ID" value="NM_001258346.3"/>
</dbReference>
<dbReference type="RefSeq" id="NP_001317674.1">
    <property type="nucleotide sequence ID" value="NM_001330745.1"/>
</dbReference>
<dbReference type="RefSeq" id="NP_001317675.1">
    <property type="nucleotide sequence ID" value="NM_001330746.1"/>
</dbReference>
<dbReference type="RefSeq" id="NP_001317676.1">
    <property type="nucleotide sequence ID" value="NM_001330747.1"/>
</dbReference>
<dbReference type="RefSeq" id="NP_001317677.1">
    <property type="nucleotide sequence ID" value="NM_001330748.1"/>
</dbReference>
<dbReference type="RefSeq" id="NP_659485.1">
    <molecule id="Q8N7B6-2"/>
    <property type="nucleotide sequence ID" value="NM_145048.5"/>
</dbReference>
<dbReference type="RefSeq" id="XP_011512107.1">
    <molecule id="Q8N7B6-2"/>
    <property type="nucleotide sequence ID" value="XM_011513805.4"/>
</dbReference>
<dbReference type="RefSeq" id="XP_016863237.1">
    <molecule id="Q8N7B6-1"/>
    <property type="nucleotide sequence ID" value="XM_017007748.3"/>
</dbReference>
<dbReference type="RefSeq" id="XP_016863238.1">
    <property type="nucleotide sequence ID" value="XM_017007749.1"/>
</dbReference>
<dbReference type="RefSeq" id="XP_016863240.1">
    <property type="nucleotide sequence ID" value="XM_017007751.1"/>
</dbReference>
<dbReference type="RefSeq" id="XP_016863241.1">
    <property type="nucleotide sequence ID" value="XM_017007752.1"/>
</dbReference>
<dbReference type="RefSeq" id="XP_016863242.1">
    <property type="nucleotide sequence ID" value="XM_017007753.1"/>
</dbReference>
<dbReference type="RefSeq" id="XP_016863247.1">
    <property type="nucleotide sequence ID" value="XM_017007758.1"/>
</dbReference>
<dbReference type="RefSeq" id="XP_016863248.1">
    <molecule id="Q8N7B6-3"/>
    <property type="nucleotide sequence ID" value="XM_017007759.3"/>
</dbReference>
<dbReference type="RefSeq" id="XP_047305579.1">
    <molecule id="Q8N7B6-1"/>
    <property type="nucleotide sequence ID" value="XM_047449623.1"/>
</dbReference>
<dbReference type="RefSeq" id="XP_047305583.1">
    <molecule id="Q8N7B6-2"/>
    <property type="nucleotide sequence ID" value="XM_047449627.1"/>
</dbReference>
<dbReference type="RefSeq" id="XP_054204930.1">
    <molecule id="Q8N7B6-1"/>
    <property type="nucleotide sequence ID" value="XM_054348955.1"/>
</dbReference>
<dbReference type="RefSeq" id="XP_054204931.1">
    <molecule id="Q8N7B6-1"/>
    <property type="nucleotide sequence ID" value="XM_054348956.1"/>
</dbReference>
<dbReference type="RefSeq" id="XP_054204936.1">
    <molecule id="Q8N7B6-2"/>
    <property type="nucleotide sequence ID" value="XM_054348961.1"/>
</dbReference>
<dbReference type="RefSeq" id="XP_054204937.1">
    <molecule id="Q8N7B6-2"/>
    <property type="nucleotide sequence ID" value="XM_054348962.1"/>
</dbReference>
<dbReference type="RefSeq" id="XP_054204939.1">
    <molecule id="Q8N7B6-3"/>
    <property type="nucleotide sequence ID" value="XM_054348964.1"/>
</dbReference>
<dbReference type="SMR" id="Q8N7B6"/>
<dbReference type="BioGRID" id="126346">
    <property type="interactions" value="19"/>
</dbReference>
<dbReference type="FunCoup" id="Q8N7B6">
    <property type="interactions" value="761"/>
</dbReference>
<dbReference type="IntAct" id="Q8N7B6">
    <property type="interactions" value="23"/>
</dbReference>
<dbReference type="STRING" id="9606.ENSP00000423881"/>
<dbReference type="GlyGen" id="Q8N7B6">
    <property type="glycosylation" value="1 site, 1 O-linked glycan (1 site)"/>
</dbReference>
<dbReference type="iPTMnet" id="Q8N7B6"/>
<dbReference type="PhosphoSitePlus" id="Q8N7B6"/>
<dbReference type="BioMuta" id="PACRGL"/>
<dbReference type="DMDM" id="126215685"/>
<dbReference type="jPOST" id="Q8N7B6"/>
<dbReference type="MassIVE" id="Q8N7B6"/>
<dbReference type="PaxDb" id="9606-ENSP00000423881"/>
<dbReference type="PeptideAtlas" id="Q8N7B6"/>
<dbReference type="ProteomicsDB" id="4032"/>
<dbReference type="ProteomicsDB" id="72280">
    <molecule id="Q8N7B6-1"/>
</dbReference>
<dbReference type="ProteomicsDB" id="72281">
    <molecule id="Q8N7B6-2"/>
</dbReference>
<dbReference type="ProteomicsDB" id="72282">
    <molecule id="Q8N7B6-3"/>
</dbReference>
<dbReference type="Pumba" id="Q8N7B6"/>
<dbReference type="Antibodypedia" id="43692">
    <property type="antibodies" value="50 antibodies from 12 providers"/>
</dbReference>
<dbReference type="DNASU" id="133015"/>
<dbReference type="Ensembl" id="ENST00000295290.12">
    <molecule id="Q8N7B6-2"/>
    <property type="protein sequence ID" value="ENSP00000295290.8"/>
    <property type="gene ID" value="ENSG00000163138.19"/>
</dbReference>
<dbReference type="Ensembl" id="ENST00000360916.9">
    <molecule id="Q8N7B6-2"/>
    <property type="protein sequence ID" value="ENSP00000354171.4"/>
    <property type="gene ID" value="ENSG00000163138.19"/>
</dbReference>
<dbReference type="Ensembl" id="ENST00000444671.6">
    <molecule id="Q8N7B6-3"/>
    <property type="protein sequence ID" value="ENSP00000415832.2"/>
    <property type="gene ID" value="ENSG00000163138.19"/>
</dbReference>
<dbReference type="Ensembl" id="ENST00000467997.6">
    <molecule id="Q8N7B6-2"/>
    <property type="protein sequence ID" value="ENSP00000423477.1"/>
    <property type="gene ID" value="ENSG00000163138.19"/>
</dbReference>
<dbReference type="Ensembl" id="ENST00000471979.6">
    <molecule id="Q8N7B6-1"/>
    <property type="protein sequence ID" value="ENSP00000423914.2"/>
    <property type="gene ID" value="ENSG00000163138.19"/>
</dbReference>
<dbReference type="Ensembl" id="ENST00000502374.5">
    <molecule id="Q8N7B6-4"/>
    <property type="protein sequence ID" value="ENSP00000425461.1"/>
    <property type="gene ID" value="ENSG00000163138.19"/>
</dbReference>
<dbReference type="Ensembl" id="ENST00000503585.6">
    <molecule id="Q8N7B6-1"/>
    <property type="protein sequence ID" value="ENSP00000423881.1"/>
    <property type="gene ID" value="ENSG00000163138.19"/>
</dbReference>
<dbReference type="Ensembl" id="ENST00000506702.5">
    <molecule id="Q8N7B6-2"/>
    <property type="protein sequence ID" value="ENSP00000423536.1"/>
    <property type="gene ID" value="ENSG00000163138.19"/>
</dbReference>
<dbReference type="Ensembl" id="ENST00000507634.5">
    <molecule id="Q8N7B6-2"/>
    <property type="protein sequence ID" value="ENSP00000425938.1"/>
    <property type="gene ID" value="ENSG00000163138.19"/>
</dbReference>
<dbReference type="GeneID" id="133015"/>
<dbReference type="KEGG" id="hsa:133015"/>
<dbReference type="MANE-Select" id="ENST00000503585.6">
    <property type="protein sequence ID" value="ENSP00000423881.1"/>
    <property type="RefSeq nucleotide sequence ID" value="NM_001258345.3"/>
    <property type="RefSeq protein sequence ID" value="NP_001245274.1"/>
</dbReference>
<dbReference type="UCSC" id="uc003gpu.4">
    <molecule id="Q8N7B6-1"/>
    <property type="organism name" value="human"/>
</dbReference>
<dbReference type="AGR" id="HGNC:28442"/>
<dbReference type="CTD" id="133015"/>
<dbReference type="DisGeNET" id="133015"/>
<dbReference type="GeneCards" id="PACRGL"/>
<dbReference type="HGNC" id="HGNC:28442">
    <property type="gene designation" value="PACRGL"/>
</dbReference>
<dbReference type="HPA" id="ENSG00000163138">
    <property type="expression patterns" value="Low tissue specificity"/>
</dbReference>
<dbReference type="neXtProt" id="NX_Q8N7B6"/>
<dbReference type="OpenTargets" id="ENSG00000163138"/>
<dbReference type="PharmGKB" id="PA164724318"/>
<dbReference type="VEuPathDB" id="HostDB:ENSG00000163138"/>
<dbReference type="eggNOG" id="KOG3961">
    <property type="taxonomic scope" value="Eukaryota"/>
</dbReference>
<dbReference type="GeneTree" id="ENSGT00940000159756"/>
<dbReference type="HOGENOM" id="CLU_070957_1_0_1"/>
<dbReference type="InParanoid" id="Q8N7B6"/>
<dbReference type="OMA" id="HKLQWEC"/>
<dbReference type="OrthoDB" id="10258089at2759"/>
<dbReference type="PAN-GO" id="Q8N7B6">
    <property type="GO annotations" value="0 GO annotations based on evolutionary models"/>
</dbReference>
<dbReference type="PhylomeDB" id="Q8N7B6"/>
<dbReference type="TreeFam" id="TF321123"/>
<dbReference type="PathwayCommons" id="Q8N7B6"/>
<dbReference type="SignaLink" id="Q8N7B6"/>
<dbReference type="BioGRID-ORCS" id="133015">
    <property type="hits" value="9 hits in 1162 CRISPR screens"/>
</dbReference>
<dbReference type="ChiTaRS" id="PACRGL">
    <property type="organism name" value="human"/>
</dbReference>
<dbReference type="GenomeRNAi" id="133015"/>
<dbReference type="Pharos" id="Q8N7B6">
    <property type="development level" value="Tdark"/>
</dbReference>
<dbReference type="PRO" id="PR:Q8N7B6"/>
<dbReference type="Proteomes" id="UP000005640">
    <property type="component" value="Chromosome 4"/>
</dbReference>
<dbReference type="RNAct" id="Q8N7B6">
    <property type="molecule type" value="protein"/>
</dbReference>
<dbReference type="Bgee" id="ENSG00000163138">
    <property type="expression patterns" value="Expressed in sperm and 153 other cell types or tissues"/>
</dbReference>
<dbReference type="ExpressionAtlas" id="Q8N7B6">
    <property type="expression patterns" value="baseline and differential"/>
</dbReference>
<dbReference type="Gene3D" id="1.25.10.10">
    <property type="entry name" value="Leucine-rich Repeat Variant"/>
    <property type="match status" value="1"/>
</dbReference>
<dbReference type="InterPro" id="IPR011989">
    <property type="entry name" value="ARM-like"/>
</dbReference>
<dbReference type="InterPro" id="IPR016024">
    <property type="entry name" value="ARM-type_fold"/>
</dbReference>
<dbReference type="InterPro" id="IPR019399">
    <property type="entry name" value="Parkin_co-regulated_protein"/>
</dbReference>
<dbReference type="PANTHER" id="PTHR21207:SF1">
    <property type="entry name" value="PACRG-LIKE PROTEIN"/>
    <property type="match status" value="1"/>
</dbReference>
<dbReference type="PANTHER" id="PTHR21207">
    <property type="entry name" value="PARKIN COREGULATED GENE PROTEIN PARK2 COREGULATED"/>
    <property type="match status" value="1"/>
</dbReference>
<dbReference type="Pfam" id="PF10274">
    <property type="entry name" value="ParcG"/>
    <property type="match status" value="1"/>
</dbReference>
<dbReference type="SUPFAM" id="SSF48371">
    <property type="entry name" value="ARM repeat"/>
    <property type="match status" value="1"/>
</dbReference>
<keyword id="KW-0007">Acetylation</keyword>
<keyword id="KW-0025">Alternative splicing</keyword>
<keyword id="KW-0597">Phosphoprotein</keyword>
<keyword id="KW-1267">Proteomics identification</keyword>
<keyword id="KW-1185">Reference proteome</keyword>